<feature type="chain" id="PRO_1000116253" description="Adenine phosphoribosyltransferase">
    <location>
        <begin position="1"/>
        <end position="178"/>
    </location>
</feature>
<accession>B9KM05</accession>
<comment type="function">
    <text evidence="1">Catalyzes a salvage reaction resulting in the formation of AMP, that is energically less costly than de novo synthesis.</text>
</comment>
<comment type="catalytic activity">
    <reaction evidence="1">
        <text>AMP + diphosphate = 5-phospho-alpha-D-ribose 1-diphosphate + adenine</text>
        <dbReference type="Rhea" id="RHEA:16609"/>
        <dbReference type="ChEBI" id="CHEBI:16708"/>
        <dbReference type="ChEBI" id="CHEBI:33019"/>
        <dbReference type="ChEBI" id="CHEBI:58017"/>
        <dbReference type="ChEBI" id="CHEBI:456215"/>
        <dbReference type="EC" id="2.4.2.7"/>
    </reaction>
</comment>
<comment type="pathway">
    <text evidence="1">Purine metabolism; AMP biosynthesis via salvage pathway; AMP from adenine: step 1/1.</text>
</comment>
<comment type="subunit">
    <text evidence="1">Homodimer.</text>
</comment>
<comment type="subcellular location">
    <subcellularLocation>
        <location evidence="1">Cytoplasm</location>
    </subcellularLocation>
</comment>
<comment type="similarity">
    <text evidence="1">Belongs to the purine/pyrimidine phosphoribosyltransferase family.</text>
</comment>
<proteinExistence type="inferred from homology"/>
<keyword id="KW-0963">Cytoplasm</keyword>
<keyword id="KW-0328">Glycosyltransferase</keyword>
<keyword id="KW-0660">Purine salvage</keyword>
<keyword id="KW-0808">Transferase</keyword>
<reference key="1">
    <citation type="journal article" date="2009" name="J. Bacteriol.">
        <title>Complete genome sequence of Rhodobacter sphaeroides KD131.</title>
        <authorList>
            <person name="Lim S.-K."/>
            <person name="Kim S.J."/>
            <person name="Cha S.H."/>
            <person name="Oh Y.-K."/>
            <person name="Rhee H.-J."/>
            <person name="Kim M.-S."/>
            <person name="Lee J.K."/>
        </authorList>
    </citation>
    <scope>NUCLEOTIDE SEQUENCE [LARGE SCALE GENOMIC DNA]</scope>
    <source>
        <strain>KD131 / KCTC 12085</strain>
    </source>
</reference>
<sequence>MTHKSVRDYIRTIVDFPHEGILFRDVTTLFADPRGFRIAIDQLLAPYAGMRFDKVAGLEARGFILGGAVAHQLSTGFVPIRKKGKLPGRTISVSYQLEYGEAVVEVHDDAIQAGEKVLLVDDLLATGGTAEAGIKLIEQLGGQVVGCAFVVDLPDLGGRKRLEAMGMEVHALCAFEGL</sequence>
<evidence type="ECO:0000255" key="1">
    <source>
        <dbReference type="HAMAP-Rule" id="MF_00004"/>
    </source>
</evidence>
<name>APT_CERSK</name>
<dbReference type="EC" id="2.4.2.7" evidence="1"/>
<dbReference type="EMBL" id="CP001150">
    <property type="protein sequence ID" value="ACM00003.1"/>
    <property type="molecule type" value="Genomic_DNA"/>
</dbReference>
<dbReference type="RefSeq" id="WP_002722715.1">
    <property type="nucleotide sequence ID" value="NC_011963.1"/>
</dbReference>
<dbReference type="SMR" id="B9KM05"/>
<dbReference type="GeneID" id="67445625"/>
<dbReference type="KEGG" id="rsk:RSKD131_0143"/>
<dbReference type="HOGENOM" id="CLU_063339_3_0_5"/>
<dbReference type="UniPathway" id="UPA00588">
    <property type="reaction ID" value="UER00646"/>
</dbReference>
<dbReference type="GO" id="GO:0005737">
    <property type="term" value="C:cytoplasm"/>
    <property type="evidence" value="ECO:0007669"/>
    <property type="project" value="UniProtKB-SubCell"/>
</dbReference>
<dbReference type="GO" id="GO:0002055">
    <property type="term" value="F:adenine binding"/>
    <property type="evidence" value="ECO:0007669"/>
    <property type="project" value="TreeGrafter"/>
</dbReference>
<dbReference type="GO" id="GO:0003999">
    <property type="term" value="F:adenine phosphoribosyltransferase activity"/>
    <property type="evidence" value="ECO:0007669"/>
    <property type="project" value="UniProtKB-UniRule"/>
</dbReference>
<dbReference type="GO" id="GO:0016208">
    <property type="term" value="F:AMP binding"/>
    <property type="evidence" value="ECO:0007669"/>
    <property type="project" value="TreeGrafter"/>
</dbReference>
<dbReference type="GO" id="GO:0006168">
    <property type="term" value="P:adenine salvage"/>
    <property type="evidence" value="ECO:0007669"/>
    <property type="project" value="InterPro"/>
</dbReference>
<dbReference type="GO" id="GO:0044209">
    <property type="term" value="P:AMP salvage"/>
    <property type="evidence" value="ECO:0007669"/>
    <property type="project" value="UniProtKB-UniRule"/>
</dbReference>
<dbReference type="GO" id="GO:0006166">
    <property type="term" value="P:purine ribonucleoside salvage"/>
    <property type="evidence" value="ECO:0007669"/>
    <property type="project" value="UniProtKB-KW"/>
</dbReference>
<dbReference type="CDD" id="cd06223">
    <property type="entry name" value="PRTases_typeI"/>
    <property type="match status" value="1"/>
</dbReference>
<dbReference type="FunFam" id="3.40.50.2020:FF:000021">
    <property type="entry name" value="Adenine phosphoribosyltransferase"/>
    <property type="match status" value="1"/>
</dbReference>
<dbReference type="Gene3D" id="3.40.50.2020">
    <property type="match status" value="1"/>
</dbReference>
<dbReference type="HAMAP" id="MF_00004">
    <property type="entry name" value="Aden_phosphoribosyltr"/>
    <property type="match status" value="1"/>
</dbReference>
<dbReference type="InterPro" id="IPR005764">
    <property type="entry name" value="Ade_phspho_trans"/>
</dbReference>
<dbReference type="InterPro" id="IPR000836">
    <property type="entry name" value="PRibTrfase_dom"/>
</dbReference>
<dbReference type="InterPro" id="IPR029057">
    <property type="entry name" value="PRTase-like"/>
</dbReference>
<dbReference type="InterPro" id="IPR050054">
    <property type="entry name" value="UPRTase/APRTase"/>
</dbReference>
<dbReference type="NCBIfam" id="TIGR01090">
    <property type="entry name" value="apt"/>
    <property type="match status" value="1"/>
</dbReference>
<dbReference type="NCBIfam" id="NF002634">
    <property type="entry name" value="PRK02304.1-3"/>
    <property type="match status" value="1"/>
</dbReference>
<dbReference type="NCBIfam" id="NF002636">
    <property type="entry name" value="PRK02304.1-5"/>
    <property type="match status" value="1"/>
</dbReference>
<dbReference type="PANTHER" id="PTHR32315">
    <property type="entry name" value="ADENINE PHOSPHORIBOSYLTRANSFERASE"/>
    <property type="match status" value="1"/>
</dbReference>
<dbReference type="PANTHER" id="PTHR32315:SF3">
    <property type="entry name" value="ADENINE PHOSPHORIBOSYLTRANSFERASE"/>
    <property type="match status" value="1"/>
</dbReference>
<dbReference type="Pfam" id="PF00156">
    <property type="entry name" value="Pribosyltran"/>
    <property type="match status" value="1"/>
</dbReference>
<dbReference type="SUPFAM" id="SSF53271">
    <property type="entry name" value="PRTase-like"/>
    <property type="match status" value="1"/>
</dbReference>
<dbReference type="PROSITE" id="PS00103">
    <property type="entry name" value="PUR_PYR_PR_TRANSFER"/>
    <property type="match status" value="1"/>
</dbReference>
<protein>
    <recommendedName>
        <fullName evidence="1">Adenine phosphoribosyltransferase</fullName>
        <shortName evidence="1">APRT</shortName>
        <ecNumber evidence="1">2.4.2.7</ecNumber>
    </recommendedName>
</protein>
<gene>
    <name evidence="1" type="primary">apt</name>
    <name type="ordered locus">RSKD131_0143</name>
</gene>
<organism>
    <name type="scientific">Cereibacter sphaeroides (strain KD131 / KCTC 12085)</name>
    <name type="common">Rhodobacter sphaeroides</name>
    <dbReference type="NCBI Taxonomy" id="557760"/>
    <lineage>
        <taxon>Bacteria</taxon>
        <taxon>Pseudomonadati</taxon>
        <taxon>Pseudomonadota</taxon>
        <taxon>Alphaproteobacteria</taxon>
        <taxon>Rhodobacterales</taxon>
        <taxon>Paracoccaceae</taxon>
        <taxon>Cereibacter</taxon>
    </lineage>
</organism>